<proteinExistence type="evidence at protein level"/>
<comment type="function">
    <text evidence="1">Dermorphin has a very potent opiate-like activity. It has high affinity and selectivity for mu-type opioid receptors (By similarity).</text>
</comment>
<comment type="subcellular location">
    <subcellularLocation>
        <location evidence="3">Secreted</location>
    </subcellularLocation>
</comment>
<comment type="tissue specificity">
    <text>Expressed by the skin glands.</text>
</comment>
<comment type="similarity">
    <text evidence="2">Belongs to the frog skin active peptide (FSAP) family. Dermorphin subfamily.</text>
</comment>
<organism>
    <name type="scientific">Pithecopus hypochondrialis</name>
    <name type="common">Orange-legged leaf frog</name>
    <name type="synonym">Phyllomedusa hypochondrialis</name>
    <dbReference type="NCBI Taxonomy" id="317381"/>
    <lineage>
        <taxon>Eukaryota</taxon>
        <taxon>Metazoa</taxon>
        <taxon>Chordata</taxon>
        <taxon>Craniata</taxon>
        <taxon>Vertebrata</taxon>
        <taxon>Euteleostomi</taxon>
        <taxon>Amphibia</taxon>
        <taxon>Batrachia</taxon>
        <taxon>Anura</taxon>
        <taxon>Neobatrachia</taxon>
        <taxon>Hyloidea</taxon>
        <taxon>Hylidae</taxon>
        <taxon>Phyllomedusinae</taxon>
        <taxon>Pithecopus</taxon>
    </lineage>
</organism>
<keyword id="KW-0027">Amidation</keyword>
<keyword id="KW-0878">Amphibian defense peptide</keyword>
<keyword id="KW-0903">Direct protein sequencing</keyword>
<keyword id="KW-0257">Endorphin</keyword>
<keyword id="KW-0379">Hydroxylation</keyword>
<keyword id="KW-0555">Opioid peptide</keyword>
<keyword id="KW-0964">Secreted</keyword>
<name>DEM_PITHY</name>
<reference key="1">
    <citation type="submission" date="2005-04" db="UniProtKB">
        <title>Bioactive peptides derived from the venom of the South American tree frog, Phyllomedusa hypochondrialis.</title>
        <authorList>
            <person name="Thompson A.H."/>
        </authorList>
    </citation>
    <scope>PROTEIN SEQUENCE</scope>
    <scope>HYDROXYLATION AT PRO-6</scope>
    <scope>AMIDATION AT SER-7</scope>
    <scope>SUBCELLULAR LOCATION</scope>
    <source>
        <tissue>Venom</tissue>
    </source>
</reference>
<accession>P84523</accession>
<dbReference type="GO" id="GO:0005576">
    <property type="term" value="C:extracellular region"/>
    <property type="evidence" value="ECO:0007669"/>
    <property type="project" value="UniProtKB-SubCell"/>
</dbReference>
<dbReference type="GO" id="GO:0001515">
    <property type="term" value="F:opioid peptide activity"/>
    <property type="evidence" value="ECO:0007669"/>
    <property type="project" value="UniProtKB-KW"/>
</dbReference>
<dbReference type="GO" id="GO:0006952">
    <property type="term" value="P:defense response"/>
    <property type="evidence" value="ECO:0007669"/>
    <property type="project" value="UniProtKB-KW"/>
</dbReference>
<dbReference type="GO" id="GO:0007218">
    <property type="term" value="P:neuropeptide signaling pathway"/>
    <property type="evidence" value="ECO:0007669"/>
    <property type="project" value="UniProtKB-KW"/>
</dbReference>
<protein>
    <recommendedName>
        <fullName evidence="4">Dermorphin</fullName>
    </recommendedName>
    <alternativeName>
        <fullName evidence="4">Hyp-6</fullName>
    </alternativeName>
</protein>
<feature type="peptide" id="PRO_0000043783" description="Dermorphin" evidence="3">
    <location>
        <begin position="1"/>
        <end position="7"/>
    </location>
</feature>
<feature type="modified residue" description="Hydroxyproline" evidence="3">
    <location>
        <position position="6"/>
    </location>
</feature>
<feature type="modified residue" description="Serine amide" evidence="3">
    <location>
        <position position="7"/>
    </location>
</feature>
<sequence length="7" mass="804">YAFGYPS</sequence>
<evidence type="ECO:0000250" key="1">
    <source>
        <dbReference type="UniProtKB" id="P05422"/>
    </source>
</evidence>
<evidence type="ECO:0000255" key="2"/>
<evidence type="ECO:0000269" key="3">
    <source ref="1"/>
</evidence>
<evidence type="ECO:0000303" key="4">
    <source ref="1"/>
</evidence>